<sequence>MVDIEAVRAKYREERDKRVQADGGRQYLSAQGEFAHYADDPHAKPIERAPVSDEVDVTIIGAGIGGLLLGARLREACAFDTIRLVDKAGDVGGTWYWNRFPGLRCDVESYVYMPLLEELGRLPSEKYATGAEIFEHCQAIARTYDLYDEALLQTSVTELSWDEDSSRWLVRTDRGDLVRSRFVAMAIGSLHRPKLPSIPGTEAFQGHSFHTSRWDFAYTGGDISGGLEKLGDKRVGIVGTGATAVQCIPHLAESAAHLYVFQRTPSTVSVRNNRPTDPGWAAGLEPGWQQRRMDNFHALTSGVDQDVDLVQDGWTEITSKLAAILPKSAADADPKDIGTAVELADFHKMEELRKRVDAIVHDKDTADALKPYYRLFCKRPCFHDGYLDTYNRPNVTLVDTQGRGVERLTPTSVVAGGREYPVDCLIFASGYESEFGVPYTNRTGFSIVGRDGIRLSEKWAEGARTFHGLQVNGFPNCFILSKAQSGLHVNVPYMLNEQSKHVAYILKAVQQRGRQVVEASATGEKEWVETILRLANRNLDFTESCTPGLFNNEGNPRNVAILNSSYGGGSVGFVNILKRWREADDLADLELREG</sequence>
<name>PTLE_STRAW</name>
<keyword id="KW-0045">Antibiotic biosynthesis</keyword>
<keyword id="KW-0274">FAD</keyword>
<keyword id="KW-0285">Flavoprotein</keyword>
<keyword id="KW-0503">Monooxygenase</keyword>
<keyword id="KW-0521">NADP</keyword>
<keyword id="KW-0560">Oxidoreductase</keyword>
<keyword id="KW-1185">Reference proteome</keyword>
<comment type="function">
    <text evidence="3">Catalyzes the flavin-dependent Baeyer-Villiger oxidation of 1-deoxy-11-oxopentalenic acid to neopentalenolactone D in the biosynthesis of neopentalenolactone antibiotic.</text>
</comment>
<comment type="catalytic activity">
    <reaction evidence="3">
        <text>1-deoxy-11-oxopentalenate + NADPH + O2 + H(+) = neopentalenolactone D + NADP(+) + H2O</text>
        <dbReference type="Rhea" id="RHEA:34639"/>
        <dbReference type="ChEBI" id="CHEBI:15377"/>
        <dbReference type="ChEBI" id="CHEBI:15378"/>
        <dbReference type="ChEBI" id="CHEBI:15379"/>
        <dbReference type="ChEBI" id="CHEBI:57783"/>
        <dbReference type="ChEBI" id="CHEBI:58349"/>
        <dbReference type="ChEBI" id="CHEBI:70780"/>
        <dbReference type="ChEBI" id="CHEBI:70859"/>
        <dbReference type="EC" id="1.14.13.171"/>
    </reaction>
</comment>
<comment type="cofactor">
    <cofactor evidence="1">
        <name>FAD</name>
        <dbReference type="ChEBI" id="CHEBI:57692"/>
    </cofactor>
    <text evidence="1">Binds 1 FAD per subunit.</text>
</comment>
<comment type="pathway">
    <text evidence="3">Antibiotic biosynthesis; neopentalenolactone biosynthesis.</text>
</comment>
<comment type="disruption phenotype">
    <text evidence="3">Cells lacking both ptlE and ptlD accumulate 1-deoxy-11-oxopentalenic acid.</text>
</comment>
<comment type="miscellaneous">
    <text evidence="5">S.avermitilis does not produce pentalenolactone itself in vivo but instead a group of new metabolites that are neopentalenolactone derivatives.</text>
</comment>
<comment type="similarity">
    <text evidence="4">Belongs to the FAD-binding monooxygenase family.</text>
</comment>
<organism>
    <name type="scientific">Streptomyces avermitilis (strain ATCC 31267 / DSM 46492 / JCM 5070 / NBRC 14893 / NCIMB 12804 / NRRL 8165 / MA-4680)</name>
    <dbReference type="NCBI Taxonomy" id="227882"/>
    <lineage>
        <taxon>Bacteria</taxon>
        <taxon>Bacillati</taxon>
        <taxon>Actinomycetota</taxon>
        <taxon>Actinomycetes</taxon>
        <taxon>Kitasatosporales</taxon>
        <taxon>Streptomycetaceae</taxon>
        <taxon>Streptomyces</taxon>
    </lineage>
</organism>
<protein>
    <recommendedName>
        <fullName>Neopentalenolactone D synthase</fullName>
        <ecNumber>1.14.13.171</ecNumber>
    </recommendedName>
    <alternativeName>
        <fullName>Neopentalenolactone biosynthesis protein E</fullName>
    </alternativeName>
</protein>
<accession>Q82IY8</accession>
<gene>
    <name type="primary">ptlE</name>
    <name type="ordered locus">SAV_2994</name>
</gene>
<dbReference type="EC" id="1.14.13.171"/>
<dbReference type="EMBL" id="BA000030">
    <property type="protein sequence ID" value="BAC70705.1"/>
    <property type="molecule type" value="Genomic_DNA"/>
</dbReference>
<dbReference type="RefSeq" id="WP_010984425.1">
    <property type="nucleotide sequence ID" value="NZ_JZJK01000090.1"/>
</dbReference>
<dbReference type="SMR" id="Q82IY8"/>
<dbReference type="GeneID" id="41540076"/>
<dbReference type="KEGG" id="sma:SAVERM_2994"/>
<dbReference type="eggNOG" id="COG2072">
    <property type="taxonomic scope" value="Bacteria"/>
</dbReference>
<dbReference type="HOGENOM" id="CLU_006937_8_2_11"/>
<dbReference type="OrthoDB" id="5168853at2"/>
<dbReference type="BioCyc" id="MetaCyc:MONOMERMETA-16851"/>
<dbReference type="UniPathway" id="UPA01021"/>
<dbReference type="Proteomes" id="UP000000428">
    <property type="component" value="Chromosome"/>
</dbReference>
<dbReference type="GO" id="GO:0016709">
    <property type="term" value="F:oxidoreductase activity, acting on paired donors, with incorporation or reduction of molecular oxygen, NAD(P)H as one donor, and incorporation of one atom of oxygen"/>
    <property type="evidence" value="ECO:0000314"/>
    <property type="project" value="UniProtKB"/>
</dbReference>
<dbReference type="GO" id="GO:0017000">
    <property type="term" value="P:antibiotic biosynthetic process"/>
    <property type="evidence" value="ECO:0000314"/>
    <property type="project" value="UniProtKB"/>
</dbReference>
<dbReference type="GO" id="GO:1901336">
    <property type="term" value="P:lactone biosynthetic process"/>
    <property type="evidence" value="ECO:0000314"/>
    <property type="project" value="UniProtKB"/>
</dbReference>
<dbReference type="FunFam" id="3.50.50.60:FF:000314">
    <property type="entry name" value="Baeyer-Villiger monooxygenase"/>
    <property type="match status" value="1"/>
</dbReference>
<dbReference type="FunFam" id="3.50.50.60:FF:000341">
    <property type="entry name" value="Baeyer-Villiger monooxygenase"/>
    <property type="match status" value="1"/>
</dbReference>
<dbReference type="Gene3D" id="3.50.50.60">
    <property type="entry name" value="FAD/NAD(P)-binding domain"/>
    <property type="match status" value="2"/>
</dbReference>
<dbReference type="InterPro" id="IPR050775">
    <property type="entry name" value="FAD-binding_Monooxygenases"/>
</dbReference>
<dbReference type="InterPro" id="IPR036188">
    <property type="entry name" value="FAD/NAD-bd_sf"/>
</dbReference>
<dbReference type="InterPro" id="IPR054972">
    <property type="entry name" value="Neo-PentlctneDsynPtlE"/>
</dbReference>
<dbReference type="NCBIfam" id="NF045818">
    <property type="entry name" value="Neo-PentlctneDsynPtlE"/>
    <property type="match status" value="1"/>
</dbReference>
<dbReference type="PANTHER" id="PTHR43098:SF4">
    <property type="entry name" value="BLR3857 PROTEIN"/>
    <property type="match status" value="1"/>
</dbReference>
<dbReference type="PANTHER" id="PTHR43098">
    <property type="entry name" value="L-ORNITHINE N(5)-MONOOXYGENASE-RELATED"/>
    <property type="match status" value="1"/>
</dbReference>
<dbReference type="Pfam" id="PF13450">
    <property type="entry name" value="NAD_binding_8"/>
    <property type="match status" value="1"/>
</dbReference>
<dbReference type="SUPFAM" id="SSF51905">
    <property type="entry name" value="FAD/NAD(P)-binding domain"/>
    <property type="match status" value="1"/>
</dbReference>
<evidence type="ECO:0000250" key="1"/>
<evidence type="ECO:0000255" key="2"/>
<evidence type="ECO:0000269" key="3">
    <source>
    </source>
</evidence>
<evidence type="ECO:0000305" key="4"/>
<evidence type="ECO:0000305" key="5">
    <source>
    </source>
</evidence>
<feature type="chain" id="PRO_0000422003" description="Neopentalenolactone D synthase">
    <location>
        <begin position="1"/>
        <end position="594"/>
    </location>
</feature>
<feature type="binding site" evidence="1">
    <location>
        <begin position="64"/>
        <end position="65"/>
    </location>
    <ligand>
        <name>FAD</name>
        <dbReference type="ChEBI" id="CHEBI:57692"/>
    </ligand>
</feature>
<feature type="binding site" evidence="1">
    <location>
        <begin position="86"/>
        <end position="87"/>
    </location>
    <ligand>
        <name>FAD</name>
        <dbReference type="ChEBI" id="CHEBI:57692"/>
    </ligand>
</feature>
<feature type="binding site" evidence="1">
    <location>
        <begin position="94"/>
        <end position="95"/>
    </location>
    <ligand>
        <name>FAD</name>
        <dbReference type="ChEBI" id="CHEBI:57692"/>
    </ligand>
</feature>
<feature type="binding site" evidence="1">
    <location>
        <begin position="106"/>
        <end position="107"/>
    </location>
    <ligand>
        <name>FAD</name>
        <dbReference type="ChEBI" id="CHEBI:57692"/>
    </ligand>
</feature>
<feature type="binding site" evidence="1">
    <location>
        <position position="112"/>
    </location>
    <ligand>
        <name>FAD</name>
        <dbReference type="ChEBI" id="CHEBI:57692"/>
    </ligand>
</feature>
<feature type="binding site" evidence="1">
    <location>
        <position position="156"/>
    </location>
    <ligand>
        <name>FAD</name>
        <dbReference type="ChEBI" id="CHEBI:57692"/>
    </ligand>
</feature>
<feature type="binding site" evidence="1">
    <location>
        <position position="494"/>
    </location>
    <ligand>
        <name>FAD</name>
        <dbReference type="ChEBI" id="CHEBI:57692"/>
    </ligand>
</feature>
<feature type="site" description="Transition state stabilizer" evidence="2">
    <location>
        <position position="379"/>
    </location>
</feature>
<reference key="1">
    <citation type="journal article" date="2001" name="Proc. Natl. Acad. Sci. U.S.A.">
        <title>Genome sequence of an industrial microorganism Streptomyces avermitilis: deducing the ability of producing secondary metabolites.</title>
        <authorList>
            <person name="Omura S."/>
            <person name="Ikeda H."/>
            <person name="Ishikawa J."/>
            <person name="Hanamoto A."/>
            <person name="Takahashi C."/>
            <person name="Shinose M."/>
            <person name="Takahashi Y."/>
            <person name="Horikawa H."/>
            <person name="Nakazawa H."/>
            <person name="Osonoe T."/>
            <person name="Kikuchi H."/>
            <person name="Shiba T."/>
            <person name="Sakaki Y."/>
            <person name="Hattori M."/>
        </authorList>
    </citation>
    <scope>NUCLEOTIDE SEQUENCE [LARGE SCALE GENOMIC DNA]</scope>
    <source>
        <strain>ATCC 31267 / DSM 46492 / JCM 5070 / NBRC 14893 / NCIMB 12804 / NRRL 8165 / MA-4680</strain>
    </source>
</reference>
<reference key="2">
    <citation type="journal article" date="2003" name="Nat. Biotechnol.">
        <title>Complete genome sequence and comparative analysis of the industrial microorganism Streptomyces avermitilis.</title>
        <authorList>
            <person name="Ikeda H."/>
            <person name="Ishikawa J."/>
            <person name="Hanamoto A."/>
            <person name="Shinose M."/>
            <person name="Kikuchi H."/>
            <person name="Shiba T."/>
            <person name="Sakaki Y."/>
            <person name="Hattori M."/>
            <person name="Omura S."/>
        </authorList>
    </citation>
    <scope>NUCLEOTIDE SEQUENCE [LARGE SCALE GENOMIC DNA]</scope>
    <source>
        <strain>ATCC 31267 / DSM 46492 / JCM 5070 / NBRC 14893 / NCIMB 12804 / NRRL 8165 / MA-4680</strain>
    </source>
</reference>
<reference key="3">
    <citation type="journal article" date="2011" name="Biochemistry">
        <title>Genome mining in Streptomyces. Elucidation of the role of Baeyer-Villiger monooxygenases and non-heme iron-dependent dehydrogenase/oxygenases in the final steps of the biosynthesis of pentalenolactone and neopentalenolactone.</title>
        <authorList>
            <person name="Seo M.J."/>
            <person name="Zhu D."/>
            <person name="Endo S."/>
            <person name="Ikeda H."/>
            <person name="Cane D.E."/>
        </authorList>
    </citation>
    <scope>FUNCTION</scope>
    <scope>CATALYTIC ACTIVITY</scope>
    <scope>PATHWAY</scope>
    <scope>DISRUPTION PHENOTYPE</scope>
    <source>
        <strain>ATCC 31267 / DSM 46492 / JCM 5070 / NBRC 14893 / NCIMB 12804 / NRRL 8165 / MA-4680</strain>
    </source>
</reference>
<proteinExistence type="evidence at protein level"/>